<sequence>MQPSWTPAPVQRTACNITAWGGEFGKEGEGRCEQVALSSGPPEGALHASREGPQPPGAENLRPSTGETFVQSGRWDGGWRGAMKGRRHRQASTPPTRPESIFVPTAQDGAQMVCKAHTRTTQYTEQDSVVTARGLLDAKRVGVAGGS</sequence>
<name>YK016_HUMAN</name>
<dbReference type="EMBL" id="BC006134">
    <property type="protein sequence ID" value="AAH06134.1"/>
    <property type="status" value="ALT_SEQ"/>
    <property type="molecule type" value="mRNA"/>
</dbReference>
<dbReference type="BioMuta" id="-"/>
<dbReference type="neXtProt" id="NX_Q9BRP9"/>
<dbReference type="InParanoid" id="Q9BRP9"/>
<dbReference type="PAN-GO" id="Q9BRP9">
    <property type="GO annotations" value="0 GO annotations based on evolutionary models"/>
</dbReference>
<dbReference type="Pharos" id="Q9BRP9">
    <property type="development level" value="Tdark"/>
</dbReference>
<dbReference type="Proteomes" id="UP000005640">
    <property type="component" value="Unplaced"/>
</dbReference>
<dbReference type="RNAct" id="Q9BRP9">
    <property type="molecule type" value="protein"/>
</dbReference>
<reference key="1">
    <citation type="journal article" date="2004" name="Genome Res.">
        <title>The status, quality, and expansion of the NIH full-length cDNA project: the Mammalian Gene Collection (MGC).</title>
        <authorList>
            <consortium name="The MGC Project Team"/>
        </authorList>
    </citation>
    <scope>NUCLEOTIDE SEQUENCE [LARGE SCALE MRNA]</scope>
    <source>
        <tissue>Brain</tissue>
    </source>
</reference>
<keyword id="KW-1185">Reference proteome</keyword>
<proteinExistence type="uncertain"/>
<comment type="caution">
    <text evidence="2">Product of a dubious CDS prediction.</text>
</comment>
<comment type="sequence caution" evidence="2">
    <conflict type="erroneous translation">
        <sequence resource="EMBL-CDS" id="AAH06134"/>
    </conflict>
    <text>Wrong choice of frame.</text>
</comment>
<evidence type="ECO:0000256" key="1">
    <source>
        <dbReference type="SAM" id="MobiDB-lite"/>
    </source>
</evidence>
<evidence type="ECO:0000305" key="2"/>
<protein>
    <recommendedName>
        <fullName>Putative uncharacterized protein MGC13053</fullName>
    </recommendedName>
</protein>
<feature type="chain" id="PRO_0000330740" description="Putative uncharacterized protein MGC13053">
    <location>
        <begin position="1"/>
        <end position="147"/>
    </location>
</feature>
<feature type="region of interest" description="Disordered" evidence="1">
    <location>
        <begin position="30"/>
        <end position="102"/>
    </location>
</feature>
<feature type="compositionally biased region" description="Polar residues" evidence="1">
    <location>
        <begin position="62"/>
        <end position="71"/>
    </location>
</feature>
<accession>Q9BRP9</accession>
<organism>
    <name type="scientific">Homo sapiens</name>
    <name type="common">Human</name>
    <dbReference type="NCBI Taxonomy" id="9606"/>
    <lineage>
        <taxon>Eukaryota</taxon>
        <taxon>Metazoa</taxon>
        <taxon>Chordata</taxon>
        <taxon>Craniata</taxon>
        <taxon>Vertebrata</taxon>
        <taxon>Euteleostomi</taxon>
        <taxon>Mammalia</taxon>
        <taxon>Eutheria</taxon>
        <taxon>Euarchontoglires</taxon>
        <taxon>Primates</taxon>
        <taxon>Haplorrhini</taxon>
        <taxon>Catarrhini</taxon>
        <taxon>Hominidae</taxon>
        <taxon>Homo</taxon>
    </lineage>
</organism>